<keyword id="KW-0963">Cytoplasm</keyword>
<keyword id="KW-1185">Reference proteome</keyword>
<keyword id="KW-0677">Repeat</keyword>
<keyword id="KW-0694">RNA-binding</keyword>
<keyword id="KW-0943">RNA-mediated gene silencing</keyword>
<keyword id="KW-0810">Translation regulation</keyword>
<accession>Q4SS66</accession>
<reference key="1">
    <citation type="journal article" date="2004" name="Nature">
        <title>Genome duplication in the teleost fish Tetraodon nigroviridis reveals the early vertebrate proto-karyotype.</title>
        <authorList>
            <person name="Jaillon O."/>
            <person name="Aury J.-M."/>
            <person name="Brunet F."/>
            <person name="Petit J.-L."/>
            <person name="Stange-Thomann N."/>
            <person name="Mauceli E."/>
            <person name="Bouneau L."/>
            <person name="Fischer C."/>
            <person name="Ozouf-Costaz C."/>
            <person name="Bernot A."/>
            <person name="Nicaud S."/>
            <person name="Jaffe D."/>
            <person name="Fisher S."/>
            <person name="Lutfalla G."/>
            <person name="Dossat C."/>
            <person name="Segurens B."/>
            <person name="Dasilva C."/>
            <person name="Salanoubat M."/>
            <person name="Levy M."/>
            <person name="Boudet N."/>
            <person name="Castellano S."/>
            <person name="Anthouard V."/>
            <person name="Jubin C."/>
            <person name="Castelli V."/>
            <person name="Katinka M."/>
            <person name="Vacherie B."/>
            <person name="Biemont C."/>
            <person name="Skalli Z."/>
            <person name="Cattolico L."/>
            <person name="Poulain J."/>
            <person name="De Berardinis V."/>
            <person name="Cruaud C."/>
            <person name="Duprat S."/>
            <person name="Brottier P."/>
            <person name="Coutanceau J.-P."/>
            <person name="Gouzy J."/>
            <person name="Parra G."/>
            <person name="Lardier G."/>
            <person name="Chapple C."/>
            <person name="McKernan K.J."/>
            <person name="McEwan P."/>
            <person name="Bosak S."/>
            <person name="Kellis M."/>
            <person name="Volff J.-N."/>
            <person name="Guigo R."/>
            <person name="Zody M.C."/>
            <person name="Mesirov J."/>
            <person name="Lindblad-Toh K."/>
            <person name="Birren B."/>
            <person name="Nusbaum C."/>
            <person name="Kahn D."/>
            <person name="Robinson-Rechavi M."/>
            <person name="Laudet V."/>
            <person name="Schachter V."/>
            <person name="Quetier F."/>
            <person name="Saurin W."/>
            <person name="Scarpelli C."/>
            <person name="Wincker P."/>
            <person name="Lander E.S."/>
            <person name="Weissenbach J."/>
            <person name="Roest Crollius H."/>
        </authorList>
    </citation>
    <scope>NUCLEOTIDE SEQUENCE [LARGE SCALE GENOMIC DNA]</scope>
</reference>
<feature type="chain" id="PRO_0000373973" description="RISC-loading complex subunit tarbp2">
    <location>
        <begin position="1"/>
        <end position="345"/>
    </location>
</feature>
<feature type="domain" description="DRBM 1" evidence="1">
    <location>
        <begin position="30"/>
        <end position="97"/>
    </location>
</feature>
<feature type="domain" description="DRBM 2" evidence="1">
    <location>
        <begin position="140"/>
        <end position="208"/>
    </location>
</feature>
<feature type="domain" description="DRBM 3" evidence="1">
    <location>
        <begin position="272"/>
        <end position="340"/>
    </location>
</feature>
<feature type="region of interest" description="Disordered" evidence="2">
    <location>
        <begin position="118"/>
        <end position="138"/>
    </location>
</feature>
<feature type="region of interest" description="Disordered" evidence="2">
    <location>
        <begin position="213"/>
        <end position="234"/>
    </location>
</feature>
<feature type="compositionally biased region" description="Polar residues" evidence="2">
    <location>
        <begin position="120"/>
        <end position="138"/>
    </location>
</feature>
<organism>
    <name type="scientific">Tetraodon nigroviridis</name>
    <name type="common">Spotted green pufferfish</name>
    <name type="synonym">Chelonodon nigroviridis</name>
    <dbReference type="NCBI Taxonomy" id="99883"/>
    <lineage>
        <taxon>Eukaryota</taxon>
        <taxon>Metazoa</taxon>
        <taxon>Chordata</taxon>
        <taxon>Craniata</taxon>
        <taxon>Vertebrata</taxon>
        <taxon>Euteleostomi</taxon>
        <taxon>Actinopterygii</taxon>
        <taxon>Neopterygii</taxon>
        <taxon>Teleostei</taxon>
        <taxon>Neoteleostei</taxon>
        <taxon>Acanthomorphata</taxon>
        <taxon>Eupercaria</taxon>
        <taxon>Tetraodontiformes</taxon>
        <taxon>Tetradontoidea</taxon>
        <taxon>Tetraodontidae</taxon>
        <taxon>Tetraodon</taxon>
    </lineage>
</organism>
<protein>
    <recommendedName>
        <fullName evidence="1">RISC-loading complex subunit tarbp2</fullName>
    </recommendedName>
</protein>
<gene>
    <name type="primary">tarbp2</name>
    <name type="ORF">GSTENG00013584001</name>
</gene>
<proteinExistence type="inferred from homology"/>
<comment type="function">
    <text evidence="1">Required for formation of the RNA induced silencing complex (RISC). Component of the RISC loading complex (RLC), also known as the micro-RNA (miRNA) loading complex (miRLC), which is composed of dicer1, ago2 and tarbp2. Within the RLC/miRLC, dicer1 and tarbp2 are required to process precursor miRNAs (pre-miRNAs) to mature miRNAs and then load them onto ago2. ago2 bound to the mature miRNA constitutes the minimal RISC and may subsequently dissociate from dicer1 and tarbp2. May also play a role in the production of short interfering RNAs (siRNAs) from double-stranded RNA (dsRNA) by dicer1.</text>
</comment>
<comment type="subunit">
    <text evidence="1">Self-associates. Component of the RISC loading complex (RLC), or micro-RNA (miRNA) loading complex (miRLC), which is composed of dicer1, ago2 and tarbp2. Note that the trimeric RLC/miRLC is also referred to as RISC.</text>
</comment>
<comment type="subcellular location">
    <subcellularLocation>
        <location evidence="1">Cytoplasm</location>
    </subcellularLocation>
</comment>
<comment type="similarity">
    <text evidence="1">Belongs to the TARBP2 family.</text>
</comment>
<name>TRBP2_TETNG</name>
<dbReference type="EMBL" id="CAAE01014479">
    <property type="protein sequence ID" value="CAF96516.1"/>
    <property type="molecule type" value="Genomic_DNA"/>
</dbReference>
<dbReference type="SMR" id="Q4SS66"/>
<dbReference type="FunCoup" id="Q4SS66">
    <property type="interactions" value="830"/>
</dbReference>
<dbReference type="STRING" id="99883.ENSTNIP00000009866"/>
<dbReference type="Ensembl" id="ENSTNIT00000010044.1">
    <property type="protein sequence ID" value="ENSTNIP00000009866.1"/>
    <property type="gene ID" value="ENSTNIG00000007065.1"/>
</dbReference>
<dbReference type="KEGG" id="tng:GSTEN00013584G001"/>
<dbReference type="GeneTree" id="ENSGT00940000157748"/>
<dbReference type="HOGENOM" id="CLU_048292_0_0_1"/>
<dbReference type="InParanoid" id="Q4SS66"/>
<dbReference type="OMA" id="GYSCTWD"/>
<dbReference type="OrthoDB" id="10056847at2759"/>
<dbReference type="TreeFam" id="TF315953"/>
<dbReference type="Proteomes" id="UP000007303">
    <property type="component" value="Unassembled WGS sequence"/>
</dbReference>
<dbReference type="GO" id="GO:0005737">
    <property type="term" value="C:cytoplasm"/>
    <property type="evidence" value="ECO:0007669"/>
    <property type="project" value="UniProtKB-SubCell"/>
</dbReference>
<dbReference type="GO" id="GO:0005634">
    <property type="term" value="C:nucleus"/>
    <property type="evidence" value="ECO:0007669"/>
    <property type="project" value="TreeGrafter"/>
</dbReference>
<dbReference type="GO" id="GO:0016442">
    <property type="term" value="C:RISC complex"/>
    <property type="evidence" value="ECO:0000250"/>
    <property type="project" value="UniProtKB"/>
</dbReference>
<dbReference type="GO" id="GO:0070578">
    <property type="term" value="C:RISC-loading complex"/>
    <property type="evidence" value="ECO:0000250"/>
    <property type="project" value="UniProtKB"/>
</dbReference>
<dbReference type="GO" id="GO:0003725">
    <property type="term" value="F:double-stranded RNA binding"/>
    <property type="evidence" value="ECO:0007669"/>
    <property type="project" value="InterPro"/>
</dbReference>
<dbReference type="GO" id="GO:0035198">
    <property type="term" value="F:miRNA binding"/>
    <property type="evidence" value="ECO:0007669"/>
    <property type="project" value="UniProtKB-UniRule"/>
</dbReference>
<dbReference type="GO" id="GO:0070883">
    <property type="term" value="F:pre-miRNA binding"/>
    <property type="evidence" value="ECO:0007669"/>
    <property type="project" value="InterPro"/>
</dbReference>
<dbReference type="GO" id="GO:0042803">
    <property type="term" value="F:protein homodimerization activity"/>
    <property type="evidence" value="ECO:0007669"/>
    <property type="project" value="UniProtKB-UniRule"/>
</dbReference>
<dbReference type="GO" id="GO:0035197">
    <property type="term" value="F:siRNA binding"/>
    <property type="evidence" value="ECO:0007669"/>
    <property type="project" value="UniProtKB-UniRule"/>
</dbReference>
<dbReference type="GO" id="GO:0098795">
    <property type="term" value="P:global gene silencing by mRNA cleavage"/>
    <property type="evidence" value="ECO:0007669"/>
    <property type="project" value="UniProtKB-UniRule"/>
</dbReference>
<dbReference type="GO" id="GO:0031054">
    <property type="term" value="P:pre-miRNA processing"/>
    <property type="evidence" value="ECO:0007669"/>
    <property type="project" value="UniProtKB-UniRule"/>
</dbReference>
<dbReference type="GO" id="GO:1903798">
    <property type="term" value="P:regulation of miRNA processing"/>
    <property type="evidence" value="ECO:0007669"/>
    <property type="project" value="InterPro"/>
</dbReference>
<dbReference type="GO" id="GO:0070921">
    <property type="term" value="P:regulation of siRNA processing"/>
    <property type="evidence" value="ECO:0007669"/>
    <property type="project" value="InterPro"/>
</dbReference>
<dbReference type="GO" id="GO:0006417">
    <property type="term" value="P:regulation of translation"/>
    <property type="evidence" value="ECO:0007669"/>
    <property type="project" value="UniProtKB-KW"/>
</dbReference>
<dbReference type="GO" id="GO:0046782">
    <property type="term" value="P:regulation of viral transcription"/>
    <property type="evidence" value="ECO:0007669"/>
    <property type="project" value="InterPro"/>
</dbReference>
<dbReference type="GO" id="GO:0070922">
    <property type="term" value="P:RISC complex assembly"/>
    <property type="evidence" value="ECO:0007669"/>
    <property type="project" value="UniProtKB-UniRule"/>
</dbReference>
<dbReference type="GO" id="GO:0030422">
    <property type="term" value="P:siRNA processing"/>
    <property type="evidence" value="ECO:0007669"/>
    <property type="project" value="UniProtKB-UniRule"/>
</dbReference>
<dbReference type="CDD" id="cd19890">
    <property type="entry name" value="DSRM_TARBP2_rpt1"/>
    <property type="match status" value="1"/>
</dbReference>
<dbReference type="CDD" id="cd10844">
    <property type="entry name" value="DSRM_TARBP2_rpt2"/>
    <property type="match status" value="1"/>
</dbReference>
<dbReference type="CDD" id="cd19893">
    <property type="entry name" value="DSRM_TARBP2_rpt3"/>
    <property type="match status" value="1"/>
</dbReference>
<dbReference type="FunFam" id="3.30.160.20:FF:000005">
    <property type="entry name" value="Putative double-stranded RNA-specific adenosine deaminase"/>
    <property type="match status" value="1"/>
</dbReference>
<dbReference type="FunFam" id="3.30.160.20:FF:000019">
    <property type="entry name" value="RISC-loading complex subunit TARBP2"/>
    <property type="match status" value="1"/>
</dbReference>
<dbReference type="FunFam" id="3.30.160.20:FF:000018">
    <property type="entry name" value="RISC-loading complex subunit TARBP2 isoform X3"/>
    <property type="match status" value="1"/>
</dbReference>
<dbReference type="Gene3D" id="3.30.160.20">
    <property type="match status" value="3"/>
</dbReference>
<dbReference type="HAMAP" id="MF_03034">
    <property type="entry name" value="TRBP2"/>
    <property type="match status" value="1"/>
</dbReference>
<dbReference type="InterPro" id="IPR014720">
    <property type="entry name" value="dsRBD_dom"/>
</dbReference>
<dbReference type="InterPro" id="IPR051247">
    <property type="entry name" value="RLC_Component"/>
</dbReference>
<dbReference type="InterPro" id="IPR028605">
    <property type="entry name" value="TRBP2"/>
</dbReference>
<dbReference type="InterPro" id="IPR044469">
    <property type="entry name" value="TRBP2_DSRM_1"/>
</dbReference>
<dbReference type="InterPro" id="IPR044470">
    <property type="entry name" value="TRBP2_DSRM_2"/>
</dbReference>
<dbReference type="InterPro" id="IPR044471">
    <property type="entry name" value="TRBP2_DSRM_3"/>
</dbReference>
<dbReference type="PANTHER" id="PTHR46205">
    <property type="entry name" value="LOQUACIOUS, ISOFORM B"/>
    <property type="match status" value="1"/>
</dbReference>
<dbReference type="PANTHER" id="PTHR46205:SF1">
    <property type="entry name" value="RISC-LOADING COMPLEX SUBUNIT TARBP2"/>
    <property type="match status" value="1"/>
</dbReference>
<dbReference type="Pfam" id="PF00035">
    <property type="entry name" value="dsrm"/>
    <property type="match status" value="2"/>
</dbReference>
<dbReference type="SMART" id="SM00358">
    <property type="entry name" value="DSRM"/>
    <property type="match status" value="3"/>
</dbReference>
<dbReference type="SUPFAM" id="SSF54768">
    <property type="entry name" value="dsRNA-binding domain-like"/>
    <property type="match status" value="3"/>
</dbReference>
<dbReference type="PROSITE" id="PS50137">
    <property type="entry name" value="DS_RBD"/>
    <property type="match status" value="3"/>
</dbReference>
<evidence type="ECO:0000255" key="1">
    <source>
        <dbReference type="HAMAP-Rule" id="MF_03034"/>
    </source>
</evidence>
<evidence type="ECO:0000256" key="2">
    <source>
        <dbReference type="SAM" id="MobiDB-lite"/>
    </source>
</evidence>
<sequence>MNDETASDSWKRNSGCSSIEQMLAVNPGKTPISLLQEYGTRIGKTPVYDLLKAEGQAHQPNFTFRVAVGEINCTGQGPSKKAAKHKAAEAALKMLKGGLGAPAGFSVGVDGFVEVDVSTDGDSSQSEMKTSGNSQQTECNPVGALQELVVQKGWRLPEYTVTQESGPAHRKEFTMTCRVERFIEIGSGTSKKLAKRNAAAKMLSRIHDVPVDLRTSNDADPEEDTFNMHMGSRTESGKSKSFSCTWDSLRNSAGEKILQLRSHPLGIPTDSNFCSLLSDLSLEQRFDVSYLDLEERSLSGLCQCLVELSTQPITVCHGCASSTDAARASAAHNALQYLKIMAGGK</sequence>